<dbReference type="EMBL" id="AE006914">
    <property type="protein sequence ID" value="AAL03515.1"/>
    <property type="molecule type" value="Genomic_DNA"/>
</dbReference>
<dbReference type="PIR" id="A97822">
    <property type="entry name" value="A97822"/>
</dbReference>
<dbReference type="RefSeq" id="WP_010977570.1">
    <property type="nucleotide sequence ID" value="NC_003103.1"/>
</dbReference>
<dbReference type="SMR" id="Q92GZ5"/>
<dbReference type="GeneID" id="928113"/>
<dbReference type="KEGG" id="rco:RC0977"/>
<dbReference type="HOGENOM" id="CLU_057217_6_2_5"/>
<dbReference type="Proteomes" id="UP000000816">
    <property type="component" value="Chromosome"/>
</dbReference>
<dbReference type="GO" id="GO:0005737">
    <property type="term" value="C:cytoplasm"/>
    <property type="evidence" value="ECO:0007669"/>
    <property type="project" value="UniProtKB-SubCell"/>
</dbReference>
<dbReference type="GO" id="GO:0000774">
    <property type="term" value="F:adenyl-nucleotide exchange factor activity"/>
    <property type="evidence" value="ECO:0007669"/>
    <property type="project" value="InterPro"/>
</dbReference>
<dbReference type="GO" id="GO:0042803">
    <property type="term" value="F:protein homodimerization activity"/>
    <property type="evidence" value="ECO:0007669"/>
    <property type="project" value="InterPro"/>
</dbReference>
<dbReference type="GO" id="GO:0051087">
    <property type="term" value="F:protein-folding chaperone binding"/>
    <property type="evidence" value="ECO:0007669"/>
    <property type="project" value="InterPro"/>
</dbReference>
<dbReference type="GO" id="GO:0051082">
    <property type="term" value="F:unfolded protein binding"/>
    <property type="evidence" value="ECO:0007669"/>
    <property type="project" value="TreeGrafter"/>
</dbReference>
<dbReference type="GO" id="GO:0006457">
    <property type="term" value="P:protein folding"/>
    <property type="evidence" value="ECO:0007669"/>
    <property type="project" value="InterPro"/>
</dbReference>
<dbReference type="GO" id="GO:0030150">
    <property type="term" value="P:protein import into mitochondrial matrix"/>
    <property type="evidence" value="ECO:0007669"/>
    <property type="project" value="TreeGrafter"/>
</dbReference>
<dbReference type="CDD" id="cd00446">
    <property type="entry name" value="GrpE"/>
    <property type="match status" value="1"/>
</dbReference>
<dbReference type="FunFam" id="2.30.22.10:FF:000001">
    <property type="entry name" value="Protein GrpE"/>
    <property type="match status" value="1"/>
</dbReference>
<dbReference type="FunFam" id="3.90.20.20:FF:000016">
    <property type="entry name" value="Protein GrpE"/>
    <property type="match status" value="1"/>
</dbReference>
<dbReference type="Gene3D" id="3.90.20.20">
    <property type="match status" value="1"/>
</dbReference>
<dbReference type="Gene3D" id="2.30.22.10">
    <property type="entry name" value="Head domain of nucleotide exchange factor GrpE"/>
    <property type="match status" value="1"/>
</dbReference>
<dbReference type="HAMAP" id="MF_01151">
    <property type="entry name" value="GrpE"/>
    <property type="match status" value="1"/>
</dbReference>
<dbReference type="InterPro" id="IPR000740">
    <property type="entry name" value="GrpE"/>
</dbReference>
<dbReference type="InterPro" id="IPR013805">
    <property type="entry name" value="GrpE_coiled_coil"/>
</dbReference>
<dbReference type="InterPro" id="IPR009012">
    <property type="entry name" value="GrpE_head"/>
</dbReference>
<dbReference type="NCBIfam" id="NF010758">
    <property type="entry name" value="PRK14161.1"/>
    <property type="match status" value="1"/>
</dbReference>
<dbReference type="PANTHER" id="PTHR21237">
    <property type="entry name" value="GRPE PROTEIN"/>
    <property type="match status" value="1"/>
</dbReference>
<dbReference type="PANTHER" id="PTHR21237:SF23">
    <property type="entry name" value="GRPE PROTEIN HOMOLOG, MITOCHONDRIAL"/>
    <property type="match status" value="1"/>
</dbReference>
<dbReference type="Pfam" id="PF01025">
    <property type="entry name" value="GrpE"/>
    <property type="match status" value="1"/>
</dbReference>
<dbReference type="PRINTS" id="PR00773">
    <property type="entry name" value="GRPEPROTEIN"/>
</dbReference>
<dbReference type="SUPFAM" id="SSF58014">
    <property type="entry name" value="Coiled-coil domain of nucleotide exchange factor GrpE"/>
    <property type="match status" value="1"/>
</dbReference>
<dbReference type="SUPFAM" id="SSF51064">
    <property type="entry name" value="Head domain of nucleotide exchange factor GrpE"/>
    <property type="match status" value="1"/>
</dbReference>
<dbReference type="PROSITE" id="PS01071">
    <property type="entry name" value="GRPE"/>
    <property type="match status" value="1"/>
</dbReference>
<accession>Q92GZ5</accession>
<evidence type="ECO:0000255" key="1">
    <source>
        <dbReference type="HAMAP-Rule" id="MF_01151"/>
    </source>
</evidence>
<organism>
    <name type="scientific">Rickettsia conorii (strain ATCC VR-613 / Malish 7)</name>
    <dbReference type="NCBI Taxonomy" id="272944"/>
    <lineage>
        <taxon>Bacteria</taxon>
        <taxon>Pseudomonadati</taxon>
        <taxon>Pseudomonadota</taxon>
        <taxon>Alphaproteobacteria</taxon>
        <taxon>Rickettsiales</taxon>
        <taxon>Rickettsiaceae</taxon>
        <taxon>Rickettsieae</taxon>
        <taxon>Rickettsia</taxon>
        <taxon>spotted fever group</taxon>
    </lineage>
</organism>
<protein>
    <recommendedName>
        <fullName evidence="1">Protein GrpE</fullName>
    </recommendedName>
    <alternativeName>
        <fullName evidence="1">HSP-70 cofactor</fullName>
    </alternativeName>
</protein>
<feature type="chain" id="PRO_0000113848" description="Protein GrpE">
    <location>
        <begin position="1"/>
        <end position="178"/>
    </location>
</feature>
<reference key="1">
    <citation type="journal article" date="2001" name="Science">
        <title>Mechanisms of evolution in Rickettsia conorii and R. prowazekii.</title>
        <authorList>
            <person name="Ogata H."/>
            <person name="Audic S."/>
            <person name="Renesto-Audiffren P."/>
            <person name="Fournier P.-E."/>
            <person name="Barbe V."/>
            <person name="Samson D."/>
            <person name="Roux V."/>
            <person name="Cossart P."/>
            <person name="Weissenbach J."/>
            <person name="Claverie J.-M."/>
            <person name="Raoult D."/>
        </authorList>
    </citation>
    <scope>NUCLEOTIDE SEQUENCE [LARGE SCALE GENOMIC DNA]</scope>
    <source>
        <strain>ATCC VR-613 / Malish 7</strain>
    </source>
</reference>
<proteinExistence type="inferred from homology"/>
<gene>
    <name evidence="1" type="primary">grpE</name>
    <name type="ordered locus">RC0977</name>
</gene>
<sequence length="178" mass="20172">MIDDNIENNEQTINDIAEEIVETANPEVTALKAEIEELKDKLIRTTAEIDNTRKRLEKARDEAKDYAIATFAKELLNVSDNLSRALAHKPANSDVEVTNIIAGVQMTKDELDKVFHKHHIEEIKPEIGSMFDYNLHNAIAQIEHPDHAPNSIITLMQSGYKIRDRLLRPATVQVVKKP</sequence>
<comment type="function">
    <text evidence="1">Participates actively in the response to hyperosmotic and heat shock by preventing the aggregation of stress-denatured proteins, in association with DnaK and GrpE. It is the nucleotide exchange factor for DnaK and may function as a thermosensor. Unfolded proteins bind initially to DnaJ; upon interaction with the DnaJ-bound protein, DnaK hydrolyzes its bound ATP, resulting in the formation of a stable complex. GrpE releases ADP from DnaK; ATP binding to DnaK triggers the release of the substrate protein, thus completing the reaction cycle. Several rounds of ATP-dependent interactions between DnaJ, DnaK and GrpE are required for fully efficient folding.</text>
</comment>
<comment type="subunit">
    <text evidence="1">Homodimer.</text>
</comment>
<comment type="subcellular location">
    <subcellularLocation>
        <location evidence="1">Cytoplasm</location>
    </subcellularLocation>
</comment>
<comment type="similarity">
    <text evidence="1">Belongs to the GrpE family.</text>
</comment>
<name>GRPE_RICCN</name>
<keyword id="KW-0143">Chaperone</keyword>
<keyword id="KW-0963">Cytoplasm</keyword>
<keyword id="KW-0346">Stress response</keyword>